<organism>
    <name type="scientific">Geobacillus thermodenitrificans (strain NG80-2)</name>
    <dbReference type="NCBI Taxonomy" id="420246"/>
    <lineage>
        <taxon>Bacteria</taxon>
        <taxon>Bacillati</taxon>
        <taxon>Bacillota</taxon>
        <taxon>Bacilli</taxon>
        <taxon>Bacillales</taxon>
        <taxon>Anoxybacillaceae</taxon>
        <taxon>Geobacillus</taxon>
    </lineage>
</organism>
<comment type="function">
    <text evidence="1">This protein binds to 23S rRNA in the presence of protein L20.</text>
</comment>
<comment type="subunit">
    <text evidence="1">Part of the 50S ribosomal subunit. Contacts protein L20.</text>
</comment>
<comment type="similarity">
    <text evidence="1">Belongs to the bacterial ribosomal protein bL21 family.</text>
</comment>
<evidence type="ECO:0000255" key="1">
    <source>
        <dbReference type="HAMAP-Rule" id="MF_01363"/>
    </source>
</evidence>
<evidence type="ECO:0000305" key="2"/>
<reference key="1">
    <citation type="journal article" date="2007" name="Proc. Natl. Acad. Sci. U.S.A.">
        <title>Genome and proteome of long-chain alkane degrading Geobacillus thermodenitrificans NG80-2 isolated from a deep-subsurface oil reservoir.</title>
        <authorList>
            <person name="Feng L."/>
            <person name="Wang W."/>
            <person name="Cheng J."/>
            <person name="Ren Y."/>
            <person name="Zhao G."/>
            <person name="Gao C."/>
            <person name="Tang Y."/>
            <person name="Liu X."/>
            <person name="Han W."/>
            <person name="Peng X."/>
            <person name="Liu R."/>
            <person name="Wang L."/>
        </authorList>
    </citation>
    <scope>NUCLEOTIDE SEQUENCE [LARGE SCALE GENOMIC DNA]</scope>
    <source>
        <strain>NG80-2</strain>
    </source>
</reference>
<dbReference type="EMBL" id="CP000557">
    <property type="protein sequence ID" value="ABO67885.1"/>
    <property type="molecule type" value="Genomic_DNA"/>
</dbReference>
<dbReference type="RefSeq" id="WP_008881067.1">
    <property type="nucleotide sequence ID" value="NC_009328.1"/>
</dbReference>
<dbReference type="SMR" id="A4IRD1"/>
<dbReference type="GeneID" id="87623312"/>
<dbReference type="KEGG" id="gtn:GTNG_2540"/>
<dbReference type="eggNOG" id="COG0261">
    <property type="taxonomic scope" value="Bacteria"/>
</dbReference>
<dbReference type="HOGENOM" id="CLU_061463_3_2_9"/>
<dbReference type="Proteomes" id="UP000001578">
    <property type="component" value="Chromosome"/>
</dbReference>
<dbReference type="GO" id="GO:0005737">
    <property type="term" value="C:cytoplasm"/>
    <property type="evidence" value="ECO:0007669"/>
    <property type="project" value="UniProtKB-ARBA"/>
</dbReference>
<dbReference type="GO" id="GO:1990904">
    <property type="term" value="C:ribonucleoprotein complex"/>
    <property type="evidence" value="ECO:0007669"/>
    <property type="project" value="UniProtKB-KW"/>
</dbReference>
<dbReference type="GO" id="GO:0005840">
    <property type="term" value="C:ribosome"/>
    <property type="evidence" value="ECO:0007669"/>
    <property type="project" value="UniProtKB-KW"/>
</dbReference>
<dbReference type="GO" id="GO:0019843">
    <property type="term" value="F:rRNA binding"/>
    <property type="evidence" value="ECO:0007669"/>
    <property type="project" value="UniProtKB-UniRule"/>
</dbReference>
<dbReference type="GO" id="GO:0003735">
    <property type="term" value="F:structural constituent of ribosome"/>
    <property type="evidence" value="ECO:0007669"/>
    <property type="project" value="InterPro"/>
</dbReference>
<dbReference type="GO" id="GO:0006412">
    <property type="term" value="P:translation"/>
    <property type="evidence" value="ECO:0007669"/>
    <property type="project" value="UniProtKB-UniRule"/>
</dbReference>
<dbReference type="HAMAP" id="MF_01363">
    <property type="entry name" value="Ribosomal_bL21"/>
    <property type="match status" value="1"/>
</dbReference>
<dbReference type="InterPro" id="IPR028909">
    <property type="entry name" value="bL21-like"/>
</dbReference>
<dbReference type="InterPro" id="IPR036164">
    <property type="entry name" value="bL21-like_sf"/>
</dbReference>
<dbReference type="InterPro" id="IPR001787">
    <property type="entry name" value="Ribosomal_bL21"/>
</dbReference>
<dbReference type="InterPro" id="IPR018258">
    <property type="entry name" value="Ribosomal_bL21_CS"/>
</dbReference>
<dbReference type="NCBIfam" id="TIGR00061">
    <property type="entry name" value="L21"/>
    <property type="match status" value="1"/>
</dbReference>
<dbReference type="PANTHER" id="PTHR21349">
    <property type="entry name" value="50S RIBOSOMAL PROTEIN L21"/>
    <property type="match status" value="1"/>
</dbReference>
<dbReference type="PANTHER" id="PTHR21349:SF0">
    <property type="entry name" value="LARGE RIBOSOMAL SUBUNIT PROTEIN BL21M"/>
    <property type="match status" value="1"/>
</dbReference>
<dbReference type="Pfam" id="PF00829">
    <property type="entry name" value="Ribosomal_L21p"/>
    <property type="match status" value="1"/>
</dbReference>
<dbReference type="SUPFAM" id="SSF141091">
    <property type="entry name" value="L21p-like"/>
    <property type="match status" value="1"/>
</dbReference>
<dbReference type="PROSITE" id="PS01169">
    <property type="entry name" value="RIBOSOMAL_L21"/>
    <property type="match status" value="1"/>
</dbReference>
<protein>
    <recommendedName>
        <fullName evidence="1">Large ribosomal subunit protein bL21</fullName>
    </recommendedName>
    <alternativeName>
        <fullName evidence="2">50S ribosomal protein L21</fullName>
    </alternativeName>
</protein>
<accession>A4IRD1</accession>
<keyword id="KW-0687">Ribonucleoprotein</keyword>
<keyword id="KW-0689">Ribosomal protein</keyword>
<keyword id="KW-0694">RNA-binding</keyword>
<keyword id="KW-0699">rRNA-binding</keyword>
<name>RL21_GEOTN</name>
<sequence>MYAIIETGGKQLKVQEGQEIYIEKLDANEGDTVTFDKVLFVGGETVKIGNPTVEGATVTAKVQKHGRQKKIIVFKYKAKKNYRRKQGHRQPYTKVVIEKINA</sequence>
<feature type="chain" id="PRO_1000067837" description="Large ribosomal subunit protein bL21">
    <location>
        <begin position="1"/>
        <end position="102"/>
    </location>
</feature>
<gene>
    <name evidence="1" type="primary">rplU</name>
    <name type="ordered locus">GTNG_2540</name>
</gene>
<proteinExistence type="inferred from homology"/>